<dbReference type="EC" id="2.7.1.21" evidence="1"/>
<dbReference type="EMBL" id="J02224">
    <property type="protein sequence ID" value="AAA45811.1"/>
    <property type="molecule type" value="Genomic_DNA"/>
</dbReference>
<dbReference type="EMBL" id="V00467">
    <property type="protein sequence ID" value="CAA23741.1"/>
    <property type="molecule type" value="Genomic_DNA"/>
</dbReference>
<dbReference type="PIR" id="A93870">
    <property type="entry name" value="KIBETC"/>
</dbReference>
<dbReference type="SMR" id="P06478"/>
<dbReference type="DrugBank" id="DB00299">
    <property type="generic name" value="Penciclovir"/>
</dbReference>
<dbReference type="DrugBank" id="DB00577">
    <property type="generic name" value="Valaciclovir"/>
</dbReference>
<dbReference type="SABIO-RK" id="P06478"/>
<dbReference type="GO" id="GO:0005524">
    <property type="term" value="F:ATP binding"/>
    <property type="evidence" value="ECO:0007669"/>
    <property type="project" value="UniProtKB-KW"/>
</dbReference>
<dbReference type="GO" id="GO:0004797">
    <property type="term" value="F:thymidine kinase activity"/>
    <property type="evidence" value="ECO:0007669"/>
    <property type="project" value="UniProtKB-EC"/>
</dbReference>
<dbReference type="GO" id="GO:0071897">
    <property type="term" value="P:DNA biosynthetic process"/>
    <property type="evidence" value="ECO:0007669"/>
    <property type="project" value="UniProtKB-KW"/>
</dbReference>
<dbReference type="GO" id="GO:0006230">
    <property type="term" value="P:TMP biosynthetic process"/>
    <property type="evidence" value="ECO:0007669"/>
    <property type="project" value="InterPro"/>
</dbReference>
<dbReference type="Gene3D" id="3.40.50.300">
    <property type="entry name" value="P-loop containing nucleotide triphosphate hydrolases"/>
    <property type="match status" value="1"/>
</dbReference>
<dbReference type="HAMAP" id="MF_04029">
    <property type="entry name" value="HSV_KITH"/>
    <property type="match status" value="1"/>
</dbReference>
<dbReference type="InterPro" id="IPR001889">
    <property type="entry name" value="Herpes_TK"/>
</dbReference>
<dbReference type="InterPro" id="IPR027417">
    <property type="entry name" value="P-loop_NTPase"/>
</dbReference>
<dbReference type="Pfam" id="PF00693">
    <property type="entry name" value="Herpes_TK"/>
    <property type="match status" value="1"/>
</dbReference>
<dbReference type="SUPFAM" id="SSF52540">
    <property type="entry name" value="P-loop containing nucleoside triphosphate hydrolases"/>
    <property type="match status" value="1"/>
</dbReference>
<feature type="chain" id="PRO_0000175070" description="Thymidine kinase">
    <location>
        <begin position="1"/>
        <end position="376"/>
    </location>
</feature>
<feature type="region of interest" description="Disordered" evidence="2">
    <location>
        <begin position="1"/>
        <end position="39"/>
    </location>
</feature>
<feature type="compositionally biased region" description="Basic residues" evidence="2">
    <location>
        <begin position="19"/>
        <end position="32"/>
    </location>
</feature>
<feature type="active site" description="Proton acceptor" evidence="1">
    <location>
        <position position="83"/>
    </location>
</feature>
<feature type="binding site" evidence="1">
    <location>
        <begin position="56"/>
        <end position="63"/>
    </location>
    <ligand>
        <name>ATP</name>
        <dbReference type="ChEBI" id="CHEBI:30616"/>
    </ligand>
</feature>
<feature type="binding site" evidence="1">
    <location>
        <position position="101"/>
    </location>
    <ligand>
        <name>substrate</name>
    </ligand>
</feature>
<feature type="binding site" evidence="1">
    <location>
        <position position="125"/>
    </location>
    <ligand>
        <name>substrate</name>
    </ligand>
</feature>
<feature type="binding site" evidence="1">
    <location>
        <position position="216"/>
    </location>
    <ligand>
        <name>ATP</name>
        <dbReference type="ChEBI" id="CHEBI:30616"/>
    </ligand>
</feature>
<feature type="binding site" evidence="1">
    <location>
        <position position="222"/>
    </location>
    <ligand>
        <name>substrate</name>
    </ligand>
</feature>
<keyword id="KW-0067">ATP-binding</keyword>
<keyword id="KW-0237">DNA synthesis</keyword>
<keyword id="KW-0244">Early protein</keyword>
<keyword id="KW-0418">Kinase</keyword>
<keyword id="KW-0547">Nucleotide-binding</keyword>
<keyword id="KW-0808">Transferase</keyword>
<evidence type="ECO:0000255" key="1">
    <source>
        <dbReference type="HAMAP-Rule" id="MF_04029"/>
    </source>
</evidence>
<evidence type="ECO:0000256" key="2">
    <source>
        <dbReference type="SAM" id="MobiDB-lite"/>
    </source>
</evidence>
<accession>P06478</accession>
<protein>
    <recommendedName>
        <fullName evidence="1">Thymidine kinase</fullName>
        <ecNumber evidence="1">2.7.1.21</ecNumber>
    </recommendedName>
</protein>
<comment type="function">
    <text evidence="1">Catalyzes the transfer of the gamma-phospho group of ATP to thymidine to generate dTMP in the salvage pathway of pyrimidine synthesis. The dTMP serves as a substrate for DNA polymerase during viral DNA replication. Allows the virus to be reactivated and to grow in non-proliferative cells lacking a high concentration of phosphorylated nucleic acid precursors.</text>
</comment>
<comment type="catalytic activity">
    <reaction evidence="1">
        <text>thymidine + ATP = dTMP + ADP + H(+)</text>
        <dbReference type="Rhea" id="RHEA:19129"/>
        <dbReference type="ChEBI" id="CHEBI:15378"/>
        <dbReference type="ChEBI" id="CHEBI:17748"/>
        <dbReference type="ChEBI" id="CHEBI:30616"/>
        <dbReference type="ChEBI" id="CHEBI:63528"/>
        <dbReference type="ChEBI" id="CHEBI:456216"/>
        <dbReference type="EC" id="2.7.1.21"/>
    </reaction>
</comment>
<comment type="subunit">
    <text evidence="1">Homodimer.</text>
</comment>
<comment type="biotechnology">
    <text>Used in molecular biology as a selectable marker to identify transfected eukaryotic cells. Used in cancer suicide gene therapy to selectively kill transformed cells.</text>
</comment>
<comment type="miscellaneous">
    <text>Phosphorylates and thereby activates certain drugs like acyclovir (ACV), valacyclovir, and famciclovir to a toxic form, that leads to successful suppression of the infection, while the uninfected cell does not have this ability because it lacks TK. Mutations in thymidine kinase may induce HSV resistance to antiviral therapies in immunocompromised patients. The most frequently observed resistant strains are unable to express TK and are avirulent in animal models of disease. Resistance may be acquired less frequently by selecting variants which no longer recognize ACV or ACV triphosphate as substrates but which retain normal functions.</text>
</comment>
<comment type="similarity">
    <text evidence="1">Belongs to the herpesviridae thymidine kinase family.</text>
</comment>
<proteinExistence type="evidence at protein level"/>
<reference key="1">
    <citation type="journal article" date="1981" name="Proc. Natl. Acad. Sci. U.S.A.">
        <title>Nucleotide sequence of the thymidine kinase gene of herpes simplex virus type 1.</title>
        <authorList>
            <person name="Wagner M.J."/>
            <person name="Sharp J.A."/>
            <person name="Summers W.C."/>
        </authorList>
    </citation>
    <scope>NUCLEOTIDE SEQUENCE [GENOMIC DNA]</scope>
</reference>
<organism>
    <name type="scientific">Human herpesvirus 1 (strain CL101)</name>
    <name type="common">HHV-1</name>
    <name type="synonym">Human herpes simplex virus 1</name>
    <dbReference type="NCBI Taxonomy" id="10302"/>
    <lineage>
        <taxon>Viruses</taxon>
        <taxon>Duplodnaviria</taxon>
        <taxon>Heunggongvirae</taxon>
        <taxon>Peploviricota</taxon>
        <taxon>Herviviricetes</taxon>
        <taxon>Herpesvirales</taxon>
        <taxon>Orthoherpesviridae</taxon>
        <taxon>Alphaherpesvirinae</taxon>
        <taxon>Simplexvirus</taxon>
        <taxon>Simplexvirus humanalpha1</taxon>
        <taxon>Human herpesvirus 1</taxon>
    </lineage>
</organism>
<sequence>MASYPCHQHASAFDQAARSRGHSNRRTALRPRRQQEATEVRLEQKMPTLLRVYIDGPHGMGKTTTTQLLVALGSRDDIVYVPEPMTYWQVLGASETIANIYTTQHRLDQGEISAGDAAVVMTSAQITMGMPYAVTDAVLAPHVGGEAGSSHAPPPALTLIFDRHPIAALLCYPAARYLMGSMTPQAVLAFVALIPPTLPGTNIVLGALPEDRHIDRLAKRQRPGERLDLAMLAAIRRVYGLLANTVRYLQGGGSWWEDWGQLSGTAVPPQGAEPQSNAGPRPHIGDTLFTLFRAPELLAPNGDLYNVFAWALDVLAKRLRPMHVFILDYDQSPAGCRDALLQLTSGMVQTHVTTPGSIPTICDLARTFAREMGEAN</sequence>
<organismHost>
    <name type="scientific">Homo sapiens</name>
    <name type="common">Human</name>
    <dbReference type="NCBI Taxonomy" id="9606"/>
</organismHost>
<gene>
    <name evidence="1" type="primary">TK</name>
    <name type="ordered locus">UL23</name>
</gene>
<name>KITH_HHV1C</name>